<feature type="chain" id="PRO_1000010364" description="Imidazoleglycerol-phosphate dehydratase">
    <location>
        <begin position="1"/>
        <end position="203"/>
    </location>
</feature>
<keyword id="KW-0028">Amino-acid biosynthesis</keyword>
<keyword id="KW-0963">Cytoplasm</keyword>
<keyword id="KW-0368">Histidine biosynthesis</keyword>
<keyword id="KW-0456">Lyase</keyword>
<keyword id="KW-1185">Reference proteome</keyword>
<sequence>MGRQGNIHRVTGETEVRVAIGLDGSGQCEVSTGVPFLDHMLHQLASHGLFDLTISATGDTHIDDHHTNEDVGIALGQALGQALADRRGIHRFGHFVAPLDEALVQVALDCSGRPHVSYSLAIPAQKIGSYDTELVKEFFVAVANNAGLTLHIRQLDGVNSHHIVEACFKAFARALRMATEIDPRRASAIPSSKGVLEQAGTTG</sequence>
<proteinExistence type="inferred from homology"/>
<accession>A5GWD4</accession>
<comment type="catalytic activity">
    <reaction evidence="1">
        <text>D-erythro-1-(imidazol-4-yl)glycerol 3-phosphate = 3-(imidazol-4-yl)-2-oxopropyl phosphate + H2O</text>
        <dbReference type="Rhea" id="RHEA:11040"/>
        <dbReference type="ChEBI" id="CHEBI:15377"/>
        <dbReference type="ChEBI" id="CHEBI:57766"/>
        <dbReference type="ChEBI" id="CHEBI:58278"/>
        <dbReference type="EC" id="4.2.1.19"/>
    </reaction>
</comment>
<comment type="pathway">
    <text evidence="1">Amino-acid biosynthesis; L-histidine biosynthesis; L-histidine from 5-phospho-alpha-D-ribose 1-diphosphate: step 6/9.</text>
</comment>
<comment type="subcellular location">
    <subcellularLocation>
        <location evidence="1">Cytoplasm</location>
    </subcellularLocation>
</comment>
<comment type="similarity">
    <text evidence="1">Belongs to the imidazoleglycerol-phosphate dehydratase family.</text>
</comment>
<reference key="1">
    <citation type="submission" date="2006-05" db="EMBL/GenBank/DDBJ databases">
        <authorList>
            <consortium name="Genoscope"/>
        </authorList>
    </citation>
    <scope>NUCLEOTIDE SEQUENCE [LARGE SCALE GENOMIC DNA]</scope>
    <source>
        <strain>RCC307</strain>
    </source>
</reference>
<gene>
    <name evidence="1" type="primary">hisB</name>
    <name type="ordered locus">SynRCC307_2290</name>
</gene>
<name>HIS7_SYNR3</name>
<organism>
    <name type="scientific">Synechococcus sp. (strain RCC307)</name>
    <dbReference type="NCBI Taxonomy" id="316278"/>
    <lineage>
        <taxon>Bacteria</taxon>
        <taxon>Bacillati</taxon>
        <taxon>Cyanobacteriota</taxon>
        <taxon>Cyanophyceae</taxon>
        <taxon>Synechococcales</taxon>
        <taxon>Synechococcaceae</taxon>
        <taxon>Synechococcus</taxon>
    </lineage>
</organism>
<protein>
    <recommendedName>
        <fullName evidence="1">Imidazoleglycerol-phosphate dehydratase</fullName>
        <shortName evidence="1">IGPD</shortName>
        <ecNumber evidence="1">4.2.1.19</ecNumber>
    </recommendedName>
</protein>
<evidence type="ECO:0000255" key="1">
    <source>
        <dbReference type="HAMAP-Rule" id="MF_00076"/>
    </source>
</evidence>
<dbReference type="EC" id="4.2.1.19" evidence="1"/>
<dbReference type="EMBL" id="CT978603">
    <property type="protein sequence ID" value="CAK29193.1"/>
    <property type="molecule type" value="Genomic_DNA"/>
</dbReference>
<dbReference type="SMR" id="A5GWD4"/>
<dbReference type="STRING" id="316278.SynRCC307_2290"/>
<dbReference type="KEGG" id="syr:SynRCC307_2290"/>
<dbReference type="eggNOG" id="COG0131">
    <property type="taxonomic scope" value="Bacteria"/>
</dbReference>
<dbReference type="HOGENOM" id="CLU_044308_3_0_3"/>
<dbReference type="OrthoDB" id="9790411at2"/>
<dbReference type="UniPathway" id="UPA00031">
    <property type="reaction ID" value="UER00011"/>
</dbReference>
<dbReference type="Proteomes" id="UP000001115">
    <property type="component" value="Chromosome"/>
</dbReference>
<dbReference type="GO" id="GO:0005737">
    <property type="term" value="C:cytoplasm"/>
    <property type="evidence" value="ECO:0007669"/>
    <property type="project" value="UniProtKB-SubCell"/>
</dbReference>
<dbReference type="GO" id="GO:0004424">
    <property type="term" value="F:imidazoleglycerol-phosphate dehydratase activity"/>
    <property type="evidence" value="ECO:0007669"/>
    <property type="project" value="UniProtKB-UniRule"/>
</dbReference>
<dbReference type="GO" id="GO:0000105">
    <property type="term" value="P:L-histidine biosynthetic process"/>
    <property type="evidence" value="ECO:0007669"/>
    <property type="project" value="UniProtKB-UniRule"/>
</dbReference>
<dbReference type="CDD" id="cd07914">
    <property type="entry name" value="IGPD"/>
    <property type="match status" value="1"/>
</dbReference>
<dbReference type="FunFam" id="3.30.230.40:FF:000002">
    <property type="entry name" value="Imidazoleglycerol-phosphate dehydratase"/>
    <property type="match status" value="1"/>
</dbReference>
<dbReference type="FunFam" id="3.30.230.40:FF:000003">
    <property type="entry name" value="Imidazoleglycerol-phosphate dehydratase HisB"/>
    <property type="match status" value="1"/>
</dbReference>
<dbReference type="Gene3D" id="3.30.230.40">
    <property type="entry name" value="Imidazole glycerol phosphate dehydratase, domain 1"/>
    <property type="match status" value="2"/>
</dbReference>
<dbReference type="HAMAP" id="MF_00076">
    <property type="entry name" value="HisB"/>
    <property type="match status" value="1"/>
</dbReference>
<dbReference type="InterPro" id="IPR038494">
    <property type="entry name" value="IGPD_sf"/>
</dbReference>
<dbReference type="InterPro" id="IPR000807">
    <property type="entry name" value="ImidazoleglycerolP_deHydtase"/>
</dbReference>
<dbReference type="InterPro" id="IPR020565">
    <property type="entry name" value="ImidazoleglycerP_deHydtase_CS"/>
</dbReference>
<dbReference type="InterPro" id="IPR020568">
    <property type="entry name" value="Ribosomal_Su5_D2-typ_SF"/>
</dbReference>
<dbReference type="NCBIfam" id="NF002108">
    <property type="entry name" value="PRK00951.1-3"/>
    <property type="match status" value="1"/>
</dbReference>
<dbReference type="NCBIfam" id="NF002109">
    <property type="entry name" value="PRK00951.1-5"/>
    <property type="match status" value="1"/>
</dbReference>
<dbReference type="NCBIfam" id="NF002111">
    <property type="entry name" value="PRK00951.2-1"/>
    <property type="match status" value="1"/>
</dbReference>
<dbReference type="NCBIfam" id="NF002114">
    <property type="entry name" value="PRK00951.2-4"/>
    <property type="match status" value="1"/>
</dbReference>
<dbReference type="PANTHER" id="PTHR23133:SF2">
    <property type="entry name" value="IMIDAZOLEGLYCEROL-PHOSPHATE DEHYDRATASE"/>
    <property type="match status" value="1"/>
</dbReference>
<dbReference type="PANTHER" id="PTHR23133">
    <property type="entry name" value="IMIDAZOLEGLYCEROL-PHOSPHATE DEHYDRATASE HIS7"/>
    <property type="match status" value="1"/>
</dbReference>
<dbReference type="Pfam" id="PF00475">
    <property type="entry name" value="IGPD"/>
    <property type="match status" value="1"/>
</dbReference>
<dbReference type="SUPFAM" id="SSF54211">
    <property type="entry name" value="Ribosomal protein S5 domain 2-like"/>
    <property type="match status" value="2"/>
</dbReference>
<dbReference type="PROSITE" id="PS00954">
    <property type="entry name" value="IGP_DEHYDRATASE_1"/>
    <property type="match status" value="1"/>
</dbReference>
<dbReference type="PROSITE" id="PS00955">
    <property type="entry name" value="IGP_DEHYDRATASE_2"/>
    <property type="match status" value="1"/>
</dbReference>